<comment type="function">
    <text evidence="1">Specifically methylates position 2 of adenine 2503 in 23S rRNA and position 2 of adenine 37 in tRNAs. m2A2503 modification seems to play a crucial role in the proofreading step occurring at the peptidyl transferase center and thus would serve to optimize ribosomal fidelity.</text>
</comment>
<comment type="catalytic activity">
    <reaction evidence="1">
        <text>adenosine(2503) in 23S rRNA + 2 reduced [2Fe-2S]-[ferredoxin] + 2 S-adenosyl-L-methionine = 2-methyladenosine(2503) in 23S rRNA + 5'-deoxyadenosine + L-methionine + 2 oxidized [2Fe-2S]-[ferredoxin] + S-adenosyl-L-homocysteine</text>
        <dbReference type="Rhea" id="RHEA:42916"/>
        <dbReference type="Rhea" id="RHEA-COMP:10000"/>
        <dbReference type="Rhea" id="RHEA-COMP:10001"/>
        <dbReference type="Rhea" id="RHEA-COMP:10152"/>
        <dbReference type="Rhea" id="RHEA-COMP:10282"/>
        <dbReference type="ChEBI" id="CHEBI:17319"/>
        <dbReference type="ChEBI" id="CHEBI:33737"/>
        <dbReference type="ChEBI" id="CHEBI:33738"/>
        <dbReference type="ChEBI" id="CHEBI:57844"/>
        <dbReference type="ChEBI" id="CHEBI:57856"/>
        <dbReference type="ChEBI" id="CHEBI:59789"/>
        <dbReference type="ChEBI" id="CHEBI:74411"/>
        <dbReference type="ChEBI" id="CHEBI:74497"/>
        <dbReference type="EC" id="2.1.1.192"/>
    </reaction>
</comment>
<comment type="catalytic activity">
    <reaction evidence="1">
        <text>adenosine(37) in tRNA + 2 reduced [2Fe-2S]-[ferredoxin] + 2 S-adenosyl-L-methionine = 2-methyladenosine(37) in tRNA + 5'-deoxyadenosine + L-methionine + 2 oxidized [2Fe-2S]-[ferredoxin] + S-adenosyl-L-homocysteine</text>
        <dbReference type="Rhea" id="RHEA:43332"/>
        <dbReference type="Rhea" id="RHEA-COMP:10000"/>
        <dbReference type="Rhea" id="RHEA-COMP:10001"/>
        <dbReference type="Rhea" id="RHEA-COMP:10162"/>
        <dbReference type="Rhea" id="RHEA-COMP:10485"/>
        <dbReference type="ChEBI" id="CHEBI:17319"/>
        <dbReference type="ChEBI" id="CHEBI:33737"/>
        <dbReference type="ChEBI" id="CHEBI:33738"/>
        <dbReference type="ChEBI" id="CHEBI:57844"/>
        <dbReference type="ChEBI" id="CHEBI:57856"/>
        <dbReference type="ChEBI" id="CHEBI:59789"/>
        <dbReference type="ChEBI" id="CHEBI:74411"/>
        <dbReference type="ChEBI" id="CHEBI:74497"/>
        <dbReference type="EC" id="2.1.1.192"/>
    </reaction>
</comment>
<comment type="cofactor">
    <cofactor evidence="1">
        <name>[4Fe-4S] cluster</name>
        <dbReference type="ChEBI" id="CHEBI:49883"/>
    </cofactor>
    <text evidence="1">Binds 1 [4Fe-4S] cluster. The cluster is coordinated with 3 cysteines and an exchangeable S-adenosyl-L-methionine.</text>
</comment>
<comment type="subcellular location">
    <subcellularLocation>
        <location evidence="1">Cytoplasm</location>
    </subcellularLocation>
</comment>
<comment type="miscellaneous">
    <text evidence="1">Reaction proceeds by a ping-pong mechanism involving intermediate methylation of a conserved cysteine residue.</text>
</comment>
<comment type="similarity">
    <text evidence="1">Belongs to the radical SAM superfamily. RlmN family.</text>
</comment>
<proteinExistence type="inferred from homology"/>
<protein>
    <recommendedName>
        <fullName evidence="1">Dual-specificity RNA methyltransferase RlmN</fullName>
        <ecNumber evidence="1">2.1.1.192</ecNumber>
    </recommendedName>
    <alternativeName>
        <fullName evidence="1">23S rRNA (adenine(2503)-C(2))-methyltransferase</fullName>
    </alternativeName>
    <alternativeName>
        <fullName evidence="1">23S rRNA m2A2503 methyltransferase</fullName>
    </alternativeName>
    <alternativeName>
        <fullName evidence="1">Ribosomal RNA large subunit methyltransferase N</fullName>
    </alternativeName>
    <alternativeName>
        <fullName evidence="1">tRNA (adenine(37)-C(2))-methyltransferase</fullName>
    </alternativeName>
    <alternativeName>
        <fullName evidence="1">tRNA m2A37 methyltransferase</fullName>
    </alternativeName>
</protein>
<gene>
    <name evidence="1" type="primary">rlmN</name>
    <name type="ordered locus">PA3806</name>
</gene>
<reference key="1">
    <citation type="journal article" date="1996" name="Gene">
        <title>Identification of a gene, pilF, required for type 4 fimbrial biogenesis and twitching motility in Pseudomonas aeruginosa.</title>
        <authorList>
            <person name="Watson A.A."/>
            <person name="Alm R.A."/>
            <person name="Mattick J.S."/>
        </authorList>
    </citation>
    <scope>NUCLEOTIDE SEQUENCE [GENOMIC DNA]</scope>
    <source>
        <strain>ATCC 15692 / DSM 22644 / CIP 104116 / JCM 14847 / LMG 12228 / 1C / PRS 101 / PAO1</strain>
    </source>
</reference>
<reference key="2">
    <citation type="journal article" date="2000" name="Nature">
        <title>Complete genome sequence of Pseudomonas aeruginosa PAO1, an opportunistic pathogen.</title>
        <authorList>
            <person name="Stover C.K."/>
            <person name="Pham X.-Q.T."/>
            <person name="Erwin A.L."/>
            <person name="Mizoguchi S.D."/>
            <person name="Warrener P."/>
            <person name="Hickey M.J."/>
            <person name="Brinkman F.S.L."/>
            <person name="Hufnagle W.O."/>
            <person name="Kowalik D.J."/>
            <person name="Lagrou M."/>
            <person name="Garber R.L."/>
            <person name="Goltry L."/>
            <person name="Tolentino E."/>
            <person name="Westbrock-Wadman S."/>
            <person name="Yuan Y."/>
            <person name="Brody L.L."/>
            <person name="Coulter S.N."/>
            <person name="Folger K.R."/>
            <person name="Kas A."/>
            <person name="Larbig K."/>
            <person name="Lim R.M."/>
            <person name="Smith K.A."/>
            <person name="Spencer D.H."/>
            <person name="Wong G.K.-S."/>
            <person name="Wu Z."/>
            <person name="Paulsen I.T."/>
            <person name="Reizer J."/>
            <person name="Saier M.H. Jr."/>
            <person name="Hancock R.E.W."/>
            <person name="Lory S."/>
            <person name="Olson M.V."/>
        </authorList>
    </citation>
    <scope>NUCLEOTIDE SEQUENCE [LARGE SCALE GENOMIC DNA]</scope>
    <source>
        <strain>ATCC 15692 / DSM 22644 / CIP 104116 / JCM 14847 / LMG 12228 / 1C / PRS 101 / PAO1</strain>
    </source>
</reference>
<reference key="3">
    <citation type="journal article" date="1996" name="Mol. Microbiol.">
        <title>Nucleoside diphosphate kinase from Pseudomonas aeruginosa: characterization of the gene and its role in cellular growth and exopolysaccharide alginate synthesis.</title>
        <authorList>
            <person name="Sundin G.W."/>
            <person name="Shankar S."/>
            <person name="Chugani S.A."/>
            <person name="Chopade B."/>
            <person name="Kavanaugh-Black A."/>
            <person name="Chakrabarty A.M."/>
        </authorList>
    </citation>
    <scope>NUCLEOTIDE SEQUENCE [GENOMIC DNA] OF 1-31</scope>
    <source>
        <strain>8822</strain>
    </source>
</reference>
<sequence length="379" mass="41700">MTTTTAGKVNLLGLTQPQLEQFFESIGEKRFRAGQVMKWIHHFGVDDFDAMTNVGKALREKLKASAEIRGPEIVSQDISADGTRKWVVRVASGSCVETVYIPQGGRGTLCVSSQAGCALDCSFCSTGKQGFNSDLTAAEVIGQVWIANKSFGTVPAKIDRAITNVVMMGMGEPLLNFDNVVAAMNIMMDDLGYGISKRKVTLSTSGVVPMIDKLGEVIDVSLALSLHAPNDELRNKLVPINKKYPLGMLLDACRRYISRLGEKRVLTVEYTLLKDVNDQPEHAEQMIALLKDTPCKINLIPFNPFPHSGYERPSNNAIRRFQDMLHKGGFNVTVRTTRGDDIDAACGQLVGQVMDRTRRSERYIAVRQLAESESAANRN</sequence>
<organism>
    <name type="scientific">Pseudomonas aeruginosa (strain ATCC 15692 / DSM 22644 / CIP 104116 / JCM 14847 / LMG 12228 / 1C / PRS 101 / PAO1)</name>
    <dbReference type="NCBI Taxonomy" id="208964"/>
    <lineage>
        <taxon>Bacteria</taxon>
        <taxon>Pseudomonadati</taxon>
        <taxon>Pseudomonadota</taxon>
        <taxon>Gammaproteobacteria</taxon>
        <taxon>Pseudomonadales</taxon>
        <taxon>Pseudomonadaceae</taxon>
        <taxon>Pseudomonas</taxon>
    </lineage>
</organism>
<dbReference type="EC" id="2.1.1.192" evidence="1"/>
<dbReference type="EMBL" id="L49434">
    <property type="protein sequence ID" value="AAB40948.1"/>
    <property type="molecule type" value="Genomic_DNA"/>
</dbReference>
<dbReference type="EMBL" id="AE004091">
    <property type="protein sequence ID" value="AAG07193.1"/>
    <property type="molecule type" value="Genomic_DNA"/>
</dbReference>
<dbReference type="EMBL" id="U41267">
    <property type="protein sequence ID" value="AAC44155.1"/>
    <property type="molecule type" value="Genomic_DNA"/>
</dbReference>
<dbReference type="PIR" id="JC5303">
    <property type="entry name" value="JC5303"/>
</dbReference>
<dbReference type="PIR" id="S77593">
    <property type="entry name" value="S77593"/>
</dbReference>
<dbReference type="RefSeq" id="NP_252495.1">
    <property type="nucleotide sequence ID" value="NC_002516.2"/>
</dbReference>
<dbReference type="RefSeq" id="WP_003092809.1">
    <property type="nucleotide sequence ID" value="NZ_QZGE01000001.1"/>
</dbReference>
<dbReference type="SMR" id="Q51385"/>
<dbReference type="FunCoup" id="Q51385">
    <property type="interactions" value="654"/>
</dbReference>
<dbReference type="STRING" id="208964.PA3806"/>
<dbReference type="PaxDb" id="208964-PA3806"/>
<dbReference type="GeneID" id="879171"/>
<dbReference type="KEGG" id="pae:PA3806"/>
<dbReference type="PATRIC" id="fig|208964.12.peg.3985"/>
<dbReference type="PseudoCAP" id="PA3806"/>
<dbReference type="HOGENOM" id="CLU_029101_0_0_6"/>
<dbReference type="InParanoid" id="Q51385"/>
<dbReference type="OrthoDB" id="9793973at2"/>
<dbReference type="PhylomeDB" id="Q51385"/>
<dbReference type="BioCyc" id="PAER208964:G1FZ6-3877-MONOMER"/>
<dbReference type="Proteomes" id="UP000002438">
    <property type="component" value="Chromosome"/>
</dbReference>
<dbReference type="GO" id="GO:0005737">
    <property type="term" value="C:cytoplasm"/>
    <property type="evidence" value="ECO:0007669"/>
    <property type="project" value="UniProtKB-SubCell"/>
</dbReference>
<dbReference type="GO" id="GO:0051539">
    <property type="term" value="F:4 iron, 4 sulfur cluster binding"/>
    <property type="evidence" value="ECO:0007669"/>
    <property type="project" value="UniProtKB-UniRule"/>
</dbReference>
<dbReference type="GO" id="GO:0046872">
    <property type="term" value="F:metal ion binding"/>
    <property type="evidence" value="ECO:0007669"/>
    <property type="project" value="UniProtKB-KW"/>
</dbReference>
<dbReference type="GO" id="GO:0070040">
    <property type="term" value="F:rRNA (adenine(2503)-C2-)-methyltransferase activity"/>
    <property type="evidence" value="ECO:0007669"/>
    <property type="project" value="UniProtKB-UniRule"/>
</dbReference>
<dbReference type="GO" id="GO:0019843">
    <property type="term" value="F:rRNA binding"/>
    <property type="evidence" value="ECO:0007669"/>
    <property type="project" value="UniProtKB-UniRule"/>
</dbReference>
<dbReference type="GO" id="GO:0002935">
    <property type="term" value="F:tRNA (adenine(37)-C2)-methyltransferase activity"/>
    <property type="evidence" value="ECO:0007669"/>
    <property type="project" value="UniProtKB-UniRule"/>
</dbReference>
<dbReference type="GO" id="GO:0000049">
    <property type="term" value="F:tRNA binding"/>
    <property type="evidence" value="ECO:0007669"/>
    <property type="project" value="UniProtKB-UniRule"/>
</dbReference>
<dbReference type="GO" id="GO:0070475">
    <property type="term" value="P:rRNA base methylation"/>
    <property type="evidence" value="ECO:0000318"/>
    <property type="project" value="GO_Central"/>
</dbReference>
<dbReference type="GO" id="GO:0030488">
    <property type="term" value="P:tRNA methylation"/>
    <property type="evidence" value="ECO:0000318"/>
    <property type="project" value="GO_Central"/>
</dbReference>
<dbReference type="CDD" id="cd01335">
    <property type="entry name" value="Radical_SAM"/>
    <property type="match status" value="1"/>
</dbReference>
<dbReference type="FunFam" id="1.10.150.530:FF:000003">
    <property type="entry name" value="Dual-specificity RNA methyltransferase RlmN"/>
    <property type="match status" value="1"/>
</dbReference>
<dbReference type="FunFam" id="3.20.20.70:FF:000008">
    <property type="entry name" value="Dual-specificity RNA methyltransferase RlmN"/>
    <property type="match status" value="1"/>
</dbReference>
<dbReference type="Gene3D" id="1.10.150.530">
    <property type="match status" value="1"/>
</dbReference>
<dbReference type="Gene3D" id="3.20.20.70">
    <property type="entry name" value="Aldolase class I"/>
    <property type="match status" value="1"/>
</dbReference>
<dbReference type="HAMAP" id="MF_01849">
    <property type="entry name" value="RNA_methyltr_RlmN"/>
    <property type="match status" value="1"/>
</dbReference>
<dbReference type="InterPro" id="IPR013785">
    <property type="entry name" value="Aldolase_TIM"/>
</dbReference>
<dbReference type="InterPro" id="IPR040072">
    <property type="entry name" value="Methyltransferase_A"/>
</dbReference>
<dbReference type="InterPro" id="IPR048641">
    <property type="entry name" value="RlmN_N"/>
</dbReference>
<dbReference type="InterPro" id="IPR027492">
    <property type="entry name" value="RNA_MTrfase_RlmN"/>
</dbReference>
<dbReference type="InterPro" id="IPR004383">
    <property type="entry name" value="rRNA_lsu_MTrfase_RlmN/Cfr"/>
</dbReference>
<dbReference type="InterPro" id="IPR007197">
    <property type="entry name" value="rSAM"/>
</dbReference>
<dbReference type="NCBIfam" id="TIGR00048">
    <property type="entry name" value="rRNA_mod_RlmN"/>
    <property type="match status" value="1"/>
</dbReference>
<dbReference type="PANTHER" id="PTHR30544">
    <property type="entry name" value="23S RRNA METHYLTRANSFERASE"/>
    <property type="match status" value="1"/>
</dbReference>
<dbReference type="PANTHER" id="PTHR30544:SF5">
    <property type="entry name" value="RADICAL SAM CORE DOMAIN-CONTAINING PROTEIN"/>
    <property type="match status" value="1"/>
</dbReference>
<dbReference type="Pfam" id="PF04055">
    <property type="entry name" value="Radical_SAM"/>
    <property type="match status" value="1"/>
</dbReference>
<dbReference type="Pfam" id="PF21016">
    <property type="entry name" value="RlmN_N"/>
    <property type="match status" value="1"/>
</dbReference>
<dbReference type="PIRSF" id="PIRSF006004">
    <property type="entry name" value="CHP00048"/>
    <property type="match status" value="1"/>
</dbReference>
<dbReference type="SFLD" id="SFLDF00275">
    <property type="entry name" value="adenosine_C2_methyltransferase"/>
    <property type="match status" value="1"/>
</dbReference>
<dbReference type="SFLD" id="SFLDS00029">
    <property type="entry name" value="Radical_SAM"/>
    <property type="match status" value="1"/>
</dbReference>
<dbReference type="SUPFAM" id="SSF102114">
    <property type="entry name" value="Radical SAM enzymes"/>
    <property type="match status" value="1"/>
</dbReference>
<dbReference type="PROSITE" id="PS51918">
    <property type="entry name" value="RADICAL_SAM"/>
    <property type="match status" value="1"/>
</dbReference>
<feature type="chain" id="PRO_0000171929" description="Dual-specificity RNA methyltransferase RlmN">
    <location>
        <begin position="1"/>
        <end position="379"/>
    </location>
</feature>
<feature type="domain" description="Radical SAM core" evidence="2">
    <location>
        <begin position="103"/>
        <end position="343"/>
    </location>
</feature>
<feature type="active site" description="Proton acceptor" evidence="1">
    <location>
        <position position="97"/>
    </location>
</feature>
<feature type="active site" description="S-methylcysteine intermediate" evidence="1">
    <location>
        <position position="346"/>
    </location>
</feature>
<feature type="binding site" evidence="1">
    <location>
        <position position="117"/>
    </location>
    <ligand>
        <name>[4Fe-4S] cluster</name>
        <dbReference type="ChEBI" id="CHEBI:49883"/>
        <note>4Fe-4S-S-AdoMet</note>
    </ligand>
</feature>
<feature type="binding site" evidence="1">
    <location>
        <position position="121"/>
    </location>
    <ligand>
        <name>[4Fe-4S] cluster</name>
        <dbReference type="ChEBI" id="CHEBI:49883"/>
        <note>4Fe-4S-S-AdoMet</note>
    </ligand>
</feature>
<feature type="binding site" evidence="1">
    <location>
        <position position="124"/>
    </location>
    <ligand>
        <name>[4Fe-4S] cluster</name>
        <dbReference type="ChEBI" id="CHEBI:49883"/>
        <note>4Fe-4S-S-AdoMet</note>
    </ligand>
</feature>
<feature type="binding site" evidence="1">
    <location>
        <begin position="171"/>
        <end position="172"/>
    </location>
    <ligand>
        <name>S-adenosyl-L-methionine</name>
        <dbReference type="ChEBI" id="CHEBI:59789"/>
    </ligand>
</feature>
<feature type="binding site" evidence="1">
    <location>
        <position position="203"/>
    </location>
    <ligand>
        <name>S-adenosyl-L-methionine</name>
        <dbReference type="ChEBI" id="CHEBI:59789"/>
    </ligand>
</feature>
<feature type="binding site" evidence="1">
    <location>
        <begin position="225"/>
        <end position="227"/>
    </location>
    <ligand>
        <name>S-adenosyl-L-methionine</name>
        <dbReference type="ChEBI" id="CHEBI:59789"/>
    </ligand>
</feature>
<feature type="binding site" evidence="1">
    <location>
        <position position="303"/>
    </location>
    <ligand>
        <name>S-adenosyl-L-methionine</name>
        <dbReference type="ChEBI" id="CHEBI:59789"/>
    </ligand>
</feature>
<feature type="disulfide bond" description="(transient)" evidence="1">
    <location>
        <begin position="110"/>
        <end position="346"/>
    </location>
</feature>
<feature type="sequence conflict" description="In Ref. 3; AAC44155." evidence="3" ref="3">
    <original>T</original>
    <variation>R</variation>
    <location>
        <position position="3"/>
    </location>
</feature>
<feature type="sequence conflict" description="In Ref. 3; AAC44155." evidence="3" ref="3">
    <original>Q</original>
    <variation>E</variation>
    <location>
        <position position="18"/>
    </location>
</feature>
<evidence type="ECO:0000255" key="1">
    <source>
        <dbReference type="HAMAP-Rule" id="MF_01849"/>
    </source>
</evidence>
<evidence type="ECO:0000255" key="2">
    <source>
        <dbReference type="PROSITE-ProRule" id="PRU01266"/>
    </source>
</evidence>
<evidence type="ECO:0000305" key="3"/>
<accession>Q51385</accession>
<accession>Q51525</accession>
<name>RLMN_PSEAE</name>
<keyword id="KW-0004">4Fe-4S</keyword>
<keyword id="KW-0963">Cytoplasm</keyword>
<keyword id="KW-1015">Disulfide bond</keyword>
<keyword id="KW-0408">Iron</keyword>
<keyword id="KW-0411">Iron-sulfur</keyword>
<keyword id="KW-0479">Metal-binding</keyword>
<keyword id="KW-0489">Methyltransferase</keyword>
<keyword id="KW-1185">Reference proteome</keyword>
<keyword id="KW-0698">rRNA processing</keyword>
<keyword id="KW-0949">S-adenosyl-L-methionine</keyword>
<keyword id="KW-0808">Transferase</keyword>
<keyword id="KW-0819">tRNA processing</keyword>